<comment type="function">
    <text evidence="1">Responsible for synthesis of pseudouridine from uracil-13 in transfer RNAs.</text>
</comment>
<comment type="catalytic activity">
    <reaction evidence="1">
        <text>uridine(13) in tRNA = pseudouridine(13) in tRNA</text>
        <dbReference type="Rhea" id="RHEA:42540"/>
        <dbReference type="Rhea" id="RHEA-COMP:10105"/>
        <dbReference type="Rhea" id="RHEA-COMP:10106"/>
        <dbReference type="ChEBI" id="CHEBI:65314"/>
        <dbReference type="ChEBI" id="CHEBI:65315"/>
        <dbReference type="EC" id="5.4.99.27"/>
    </reaction>
</comment>
<comment type="similarity">
    <text evidence="1">Belongs to the pseudouridine synthase TruD family.</text>
</comment>
<comment type="sequence caution" evidence="2">
    <conflict type="erroneous initiation">
        <sequence resource="EMBL-CDS" id="CAG21391"/>
    </conflict>
</comment>
<evidence type="ECO:0000255" key="1">
    <source>
        <dbReference type="HAMAP-Rule" id="MF_01082"/>
    </source>
</evidence>
<evidence type="ECO:0000305" key="2"/>
<reference key="1">
    <citation type="journal article" date="2005" name="Science">
        <title>Life at depth: Photobacterium profundum genome sequence and expression analysis.</title>
        <authorList>
            <person name="Vezzi A."/>
            <person name="Campanaro S."/>
            <person name="D'Angelo M."/>
            <person name="Simonato F."/>
            <person name="Vitulo N."/>
            <person name="Lauro F.M."/>
            <person name="Cestaro A."/>
            <person name="Malacrida G."/>
            <person name="Simionati B."/>
            <person name="Cannata N."/>
            <person name="Romualdi C."/>
            <person name="Bartlett D.H."/>
            <person name="Valle G."/>
        </authorList>
    </citation>
    <scope>NUCLEOTIDE SEQUENCE [LARGE SCALE GENOMIC DNA]</scope>
    <source>
        <strain>ATCC BAA-1253 / SS9</strain>
    </source>
</reference>
<protein>
    <recommendedName>
        <fullName evidence="1">tRNA pseudouridine synthase D</fullName>
        <ecNumber evidence="1">5.4.99.27</ecNumber>
    </recommendedName>
    <alternativeName>
        <fullName evidence="1">tRNA pseudouridine(13) synthase</fullName>
    </alternativeName>
    <alternativeName>
        <fullName evidence="1">tRNA pseudouridylate synthase D</fullName>
    </alternativeName>
    <alternativeName>
        <fullName evidence="1">tRNA-uridine isomerase D</fullName>
    </alternativeName>
</protein>
<proteinExistence type="inferred from homology"/>
<accession>Q6LMT5</accession>
<keyword id="KW-0413">Isomerase</keyword>
<keyword id="KW-1185">Reference proteome</keyword>
<keyword id="KW-0819">tRNA processing</keyword>
<gene>
    <name evidence="1" type="primary">truD</name>
    <name type="ordered locus">PBPRA3075</name>
</gene>
<feature type="chain" id="PRO_0000152514" description="tRNA pseudouridine synthase D">
    <location>
        <begin position="1"/>
        <end position="352"/>
    </location>
</feature>
<feature type="domain" description="TRUD" evidence="1">
    <location>
        <begin position="158"/>
        <end position="306"/>
    </location>
</feature>
<feature type="active site" description="Nucleophile" evidence="1">
    <location>
        <position position="81"/>
    </location>
</feature>
<dbReference type="EC" id="5.4.99.27" evidence="1"/>
<dbReference type="EMBL" id="CR378673">
    <property type="protein sequence ID" value="CAG21391.1"/>
    <property type="status" value="ALT_INIT"/>
    <property type="molecule type" value="Genomic_DNA"/>
</dbReference>
<dbReference type="RefSeq" id="WP_041394817.1">
    <property type="nucleotide sequence ID" value="NC_006370.1"/>
</dbReference>
<dbReference type="SMR" id="Q6LMT5"/>
<dbReference type="STRING" id="298386.PBPRA3075"/>
<dbReference type="KEGG" id="ppr:PBPRA3075"/>
<dbReference type="eggNOG" id="COG0585">
    <property type="taxonomic scope" value="Bacteria"/>
</dbReference>
<dbReference type="HOGENOM" id="CLU_005281_4_0_6"/>
<dbReference type="Proteomes" id="UP000000593">
    <property type="component" value="Chromosome 1"/>
</dbReference>
<dbReference type="GO" id="GO:0005829">
    <property type="term" value="C:cytosol"/>
    <property type="evidence" value="ECO:0007669"/>
    <property type="project" value="TreeGrafter"/>
</dbReference>
<dbReference type="GO" id="GO:0003723">
    <property type="term" value="F:RNA binding"/>
    <property type="evidence" value="ECO:0007669"/>
    <property type="project" value="InterPro"/>
</dbReference>
<dbReference type="GO" id="GO:0160150">
    <property type="term" value="F:tRNA pseudouridine(13) synthase activity"/>
    <property type="evidence" value="ECO:0007669"/>
    <property type="project" value="UniProtKB-EC"/>
</dbReference>
<dbReference type="GO" id="GO:0031119">
    <property type="term" value="P:tRNA pseudouridine synthesis"/>
    <property type="evidence" value="ECO:0007669"/>
    <property type="project" value="UniProtKB-UniRule"/>
</dbReference>
<dbReference type="CDD" id="cd02575">
    <property type="entry name" value="PseudoU_synth_EcTruD"/>
    <property type="match status" value="1"/>
</dbReference>
<dbReference type="Gene3D" id="3.30.2350.20">
    <property type="entry name" value="TruD, catalytic domain"/>
    <property type="match status" value="1"/>
</dbReference>
<dbReference type="Gene3D" id="3.30.2340.10">
    <property type="entry name" value="TruD, insertion domain"/>
    <property type="match status" value="1"/>
</dbReference>
<dbReference type="HAMAP" id="MF_01082">
    <property type="entry name" value="TruD"/>
    <property type="match status" value="1"/>
</dbReference>
<dbReference type="InterPro" id="IPR020103">
    <property type="entry name" value="PsdUridine_synth_cat_dom_sf"/>
</dbReference>
<dbReference type="InterPro" id="IPR001656">
    <property type="entry name" value="PsdUridine_synth_TruD"/>
</dbReference>
<dbReference type="InterPro" id="IPR020119">
    <property type="entry name" value="PsdUridine_synth_TruD_CS"/>
</dbReference>
<dbReference type="InterPro" id="IPR011760">
    <property type="entry name" value="PsdUridine_synth_TruD_insert"/>
</dbReference>
<dbReference type="InterPro" id="IPR042214">
    <property type="entry name" value="TruD_catalytic"/>
</dbReference>
<dbReference type="InterPro" id="IPR043165">
    <property type="entry name" value="TruD_insert_sf"/>
</dbReference>
<dbReference type="InterPro" id="IPR050170">
    <property type="entry name" value="TruD_pseudoU_synthase"/>
</dbReference>
<dbReference type="NCBIfam" id="NF002155">
    <property type="entry name" value="PRK00984.1-4"/>
    <property type="match status" value="1"/>
</dbReference>
<dbReference type="NCBIfam" id="TIGR00094">
    <property type="entry name" value="tRNA_TruD_broad"/>
    <property type="match status" value="1"/>
</dbReference>
<dbReference type="PANTHER" id="PTHR47811">
    <property type="entry name" value="TRNA PSEUDOURIDINE SYNTHASE D"/>
    <property type="match status" value="1"/>
</dbReference>
<dbReference type="PANTHER" id="PTHR47811:SF1">
    <property type="entry name" value="TRNA PSEUDOURIDINE SYNTHASE D"/>
    <property type="match status" value="1"/>
</dbReference>
<dbReference type="Pfam" id="PF01142">
    <property type="entry name" value="TruD"/>
    <property type="match status" value="2"/>
</dbReference>
<dbReference type="SUPFAM" id="SSF55120">
    <property type="entry name" value="Pseudouridine synthase"/>
    <property type="match status" value="1"/>
</dbReference>
<dbReference type="PROSITE" id="PS50984">
    <property type="entry name" value="TRUD"/>
    <property type="match status" value="1"/>
</dbReference>
<dbReference type="PROSITE" id="PS01268">
    <property type="entry name" value="UPF0024"/>
    <property type="match status" value="1"/>
</dbReference>
<name>TRUD_PHOPR</name>
<sequence length="352" mass="39564">MLNVMDKFCWLYEKPTCQGQIKALPEHFIVKENLGFEFAGKGEHFMVKIRKVGENTKYVVNELAKACGVKSRDVSWAGLKDRHAVTEQWISVHLPGKADPDLTDFVAEHPGIEVLETTRHDKKLRPGDLVGNWFQIRLLDLTNPEELALKLEQVKMHGVPNYFGQQRFGHGGNNVIKARSWGNDEFRLRDKSKRSFYLSAARSWLFNMVLSTRIEQGSVNSLMVGDCLQNAGEDNCFLAESITEELQASIDKGLVNITAPLVGDNALPTAADAEAFELAIIANEPSLLKLICDNRMRHERRTLLLKPQEMEWQFDGNDVVLSFALPAGCFATSVVRELLVEQEGSTHANIDQ</sequence>
<organism>
    <name type="scientific">Photobacterium profundum (strain SS9)</name>
    <dbReference type="NCBI Taxonomy" id="298386"/>
    <lineage>
        <taxon>Bacteria</taxon>
        <taxon>Pseudomonadati</taxon>
        <taxon>Pseudomonadota</taxon>
        <taxon>Gammaproteobacteria</taxon>
        <taxon>Vibrionales</taxon>
        <taxon>Vibrionaceae</taxon>
        <taxon>Photobacterium</taxon>
    </lineage>
</organism>